<name>ZNF32_MOUSE</name>
<feature type="chain" id="PRO_0000047362" description="Zinc finger protein 32">
    <location>
        <begin position="1"/>
        <end position="272"/>
    </location>
</feature>
<feature type="zinc finger region" description="C2H2-type 1" evidence="2">
    <location>
        <begin position="76"/>
        <end position="98"/>
    </location>
</feature>
<feature type="zinc finger region" description="C2H2-type 2" evidence="2">
    <location>
        <begin position="104"/>
        <end position="126"/>
    </location>
</feature>
<feature type="zinc finger region" description="C2H2-type 3" evidence="2">
    <location>
        <begin position="132"/>
        <end position="154"/>
    </location>
</feature>
<feature type="zinc finger region" description="C2H2-type 4" evidence="2">
    <location>
        <begin position="160"/>
        <end position="182"/>
    </location>
</feature>
<feature type="zinc finger region" description="C2H2-type 5" evidence="2">
    <location>
        <begin position="188"/>
        <end position="210"/>
    </location>
</feature>
<feature type="zinc finger region" description="C2H2-type 6" evidence="2">
    <location>
        <begin position="216"/>
        <end position="238"/>
    </location>
</feature>
<feature type="zinc finger region" description="CCHC-type" evidence="1">
    <location>
        <begin position="244"/>
        <end position="266"/>
    </location>
</feature>
<feature type="region of interest" description="Disordered" evidence="3">
    <location>
        <begin position="50"/>
        <end position="69"/>
    </location>
</feature>
<feature type="compositionally biased region" description="Basic and acidic residues" evidence="3">
    <location>
        <begin position="50"/>
        <end position="65"/>
    </location>
</feature>
<feature type="binding site" evidence="1">
    <location>
        <position position="78"/>
    </location>
    <ligand>
        <name>Zn(2+)</name>
        <dbReference type="ChEBI" id="CHEBI:29105"/>
        <label>1</label>
    </ligand>
</feature>
<feature type="binding site" evidence="1">
    <location>
        <position position="81"/>
    </location>
    <ligand>
        <name>Zn(2+)</name>
        <dbReference type="ChEBI" id="CHEBI:29105"/>
        <label>1</label>
    </ligand>
</feature>
<feature type="binding site" evidence="1">
    <location>
        <position position="94"/>
    </location>
    <ligand>
        <name>Zn(2+)</name>
        <dbReference type="ChEBI" id="CHEBI:29105"/>
        <label>1</label>
    </ligand>
</feature>
<feature type="binding site" evidence="1">
    <location>
        <position position="98"/>
    </location>
    <ligand>
        <name>Zn(2+)</name>
        <dbReference type="ChEBI" id="CHEBI:29105"/>
        <label>1</label>
    </ligand>
</feature>
<feature type="binding site" evidence="1">
    <location>
        <position position="106"/>
    </location>
    <ligand>
        <name>Zn(2+)</name>
        <dbReference type="ChEBI" id="CHEBI:29105"/>
        <label>2</label>
    </ligand>
</feature>
<feature type="binding site" evidence="1">
    <location>
        <position position="109"/>
    </location>
    <ligand>
        <name>Zn(2+)</name>
        <dbReference type="ChEBI" id="CHEBI:29105"/>
        <label>2</label>
    </ligand>
</feature>
<feature type="binding site" evidence="1">
    <location>
        <position position="122"/>
    </location>
    <ligand>
        <name>Zn(2+)</name>
        <dbReference type="ChEBI" id="CHEBI:29105"/>
        <label>2</label>
    </ligand>
</feature>
<feature type="binding site" evidence="1">
    <location>
        <position position="126"/>
    </location>
    <ligand>
        <name>Zn(2+)</name>
        <dbReference type="ChEBI" id="CHEBI:29105"/>
        <label>2</label>
    </ligand>
</feature>
<feature type="binding site" evidence="1">
    <location>
        <position position="140"/>
    </location>
    <ligand>
        <name>Zn(2+)</name>
        <dbReference type="ChEBI" id="CHEBI:29105"/>
        <label>3</label>
    </ligand>
</feature>
<feature type="binding site" evidence="1">
    <location>
        <position position="143"/>
    </location>
    <ligand>
        <name>Zn(2+)</name>
        <dbReference type="ChEBI" id="CHEBI:29105"/>
        <label>3</label>
    </ligand>
</feature>
<feature type="binding site" evidence="1">
    <location>
        <position position="156"/>
    </location>
    <ligand>
        <name>Zn(2+)</name>
        <dbReference type="ChEBI" id="CHEBI:29105"/>
        <label>3</label>
    </ligand>
</feature>
<feature type="binding site" evidence="1">
    <location>
        <position position="160"/>
    </location>
    <ligand>
        <name>Zn(2+)</name>
        <dbReference type="ChEBI" id="CHEBI:29105"/>
        <label>3</label>
    </ligand>
</feature>
<feature type="binding site" evidence="1">
    <location>
        <position position="197"/>
    </location>
    <ligand>
        <name>Zn(2+)</name>
        <dbReference type="ChEBI" id="CHEBI:29105"/>
        <label>4</label>
    </ligand>
</feature>
<feature type="binding site" evidence="1">
    <location>
        <position position="200"/>
    </location>
    <ligand>
        <name>Zn(2+)</name>
        <dbReference type="ChEBI" id="CHEBI:29105"/>
        <label>4</label>
    </ligand>
</feature>
<feature type="binding site" evidence="1">
    <location>
        <position position="213"/>
    </location>
    <ligand>
        <name>Zn(2+)</name>
        <dbReference type="ChEBI" id="CHEBI:29105"/>
        <label>4</label>
    </ligand>
</feature>
<feature type="binding site" evidence="1">
    <location>
        <position position="217"/>
    </location>
    <ligand>
        <name>Zn(2+)</name>
        <dbReference type="ChEBI" id="CHEBI:29105"/>
        <label>4</label>
    </ligand>
</feature>
<feature type="binding site" evidence="1">
    <location>
        <position position="246"/>
    </location>
    <ligand>
        <name>Zn(2+)</name>
        <dbReference type="ChEBI" id="CHEBI:29105"/>
        <label>5</label>
    </ligand>
</feature>
<feature type="binding site" evidence="1">
    <location>
        <position position="249"/>
    </location>
    <ligand>
        <name>Zn(2+)</name>
        <dbReference type="ChEBI" id="CHEBI:29105"/>
        <label>5</label>
    </ligand>
</feature>
<feature type="binding site" evidence="1">
    <location>
        <position position="262"/>
    </location>
    <ligand>
        <name>Zn(2+)</name>
        <dbReference type="ChEBI" id="CHEBI:29105"/>
        <label>5</label>
    </ligand>
</feature>
<feature type="binding site" evidence="1">
    <location>
        <position position="266"/>
    </location>
    <ligand>
        <name>Zn(2+)</name>
        <dbReference type="ChEBI" id="CHEBI:29105"/>
        <label>5</label>
    </ligand>
</feature>
<feature type="splice variant" id="VSP_016954" description="In isoform 2." evidence="4">
    <original>FN</original>
    <variation>FTYWCILHDFPLVLPD</variation>
    <location>
        <begin position="23"/>
        <end position="24"/>
    </location>
</feature>
<sequence>MFGFPTATLLDCHGRYAQNVAFFNVMTEAHKYDPSEATGSSSWDFQSSFRREKLEQKSPESKALQEDSPGVRQKVYDCQECGKSFRQKGSLTLHERIHTGQKPFECTQCGKSFRAKGNLVTHQRIHTGEKPYQCKECGKSFSQRGSLAVHERLHTGQKPYECAICQRSFRNQSNLAVHRRVHSGEKPYRCDQCGKAFSQKGSLIVHIRVHTGLKPYACSHCRKSFHTRGNCLLHGKVHTGETPYLCGQCGKSFTQRGSLAVHQRSCSQRLTL</sequence>
<dbReference type="EMBL" id="AK146789">
    <property type="protein sequence ID" value="BAE27433.1"/>
    <property type="molecule type" value="mRNA"/>
</dbReference>
<dbReference type="EMBL" id="BC048843">
    <property type="protein sequence ID" value="AAH48843.1"/>
    <property type="molecule type" value="mRNA"/>
</dbReference>
<dbReference type="CCDS" id="CCDS39607.1">
    <molecule id="Q80V23-1"/>
</dbReference>
<dbReference type="CCDS" id="CCDS85139.1">
    <molecule id="Q80V23-2"/>
</dbReference>
<dbReference type="RefSeq" id="NP_001333576.1">
    <molecule id="Q80V23-2"/>
    <property type="nucleotide sequence ID" value="NM_001346647.1"/>
</dbReference>
<dbReference type="RefSeq" id="NP_001333577.1">
    <molecule id="Q80V23-2"/>
    <property type="nucleotide sequence ID" value="NM_001346648.1"/>
</dbReference>
<dbReference type="RefSeq" id="NP_001333578.1">
    <molecule id="Q80V23-1"/>
    <property type="nucleotide sequence ID" value="NM_001346649.1"/>
</dbReference>
<dbReference type="RefSeq" id="NP_001333579.1">
    <molecule id="Q80V23-1"/>
    <property type="nucleotide sequence ID" value="NM_001346650.1"/>
</dbReference>
<dbReference type="RefSeq" id="NP_001333580.1">
    <property type="nucleotide sequence ID" value="NM_001346651.1"/>
</dbReference>
<dbReference type="RefSeq" id="NP_001333581.1">
    <property type="nucleotide sequence ID" value="NM_001346652.1"/>
</dbReference>
<dbReference type="RefSeq" id="NP_001333582.1">
    <property type="nucleotide sequence ID" value="NM_001346653.1"/>
</dbReference>
<dbReference type="RefSeq" id="NP_808352.1">
    <molecule id="Q80V23-1"/>
    <property type="nucleotide sequence ID" value="NM_177684.3"/>
</dbReference>
<dbReference type="RefSeq" id="XP_006506080.1">
    <molecule id="Q80V23-2"/>
    <property type="nucleotide sequence ID" value="XM_006506017.3"/>
</dbReference>
<dbReference type="SMR" id="Q80V23"/>
<dbReference type="STRING" id="10090.ENSMUSP00000108481"/>
<dbReference type="iPTMnet" id="Q80V23"/>
<dbReference type="PhosphoSitePlus" id="Q80V23"/>
<dbReference type="SwissPalm" id="Q80V23"/>
<dbReference type="ProteomicsDB" id="275303">
    <molecule id="Q80V23-1"/>
</dbReference>
<dbReference type="ProteomicsDB" id="275304">
    <molecule id="Q80V23-2"/>
</dbReference>
<dbReference type="Pumba" id="Q80V23"/>
<dbReference type="Antibodypedia" id="26938">
    <property type="antibodies" value="55 antibodies from 12 providers"/>
</dbReference>
<dbReference type="DNASU" id="232337"/>
<dbReference type="Ensembl" id="ENSMUST00000112860.2">
    <molecule id="Q80V23-2"/>
    <property type="protein sequence ID" value="ENSMUSP00000108481.2"/>
    <property type="gene ID" value="ENSMUSG00000059689.16"/>
</dbReference>
<dbReference type="Ensembl" id="ENSMUST00000112861.8">
    <molecule id="Q80V23-1"/>
    <property type="protein sequence ID" value="ENSMUSP00000108482.2"/>
    <property type="gene ID" value="ENSMUSG00000059689.16"/>
</dbReference>
<dbReference type="Ensembl" id="ENSMUST00000164472.8">
    <molecule id="Q80V23-1"/>
    <property type="protein sequence ID" value="ENSMUSP00000130144.2"/>
    <property type="gene ID" value="ENSMUSG00000059689.16"/>
</dbReference>
<dbReference type="Ensembl" id="ENSMUST00000223041.2">
    <molecule id="Q80V23-2"/>
    <property type="protein sequence ID" value="ENSMUSP00000152569.2"/>
    <property type="gene ID" value="ENSMUSG00000059689.16"/>
</dbReference>
<dbReference type="GeneID" id="232337"/>
<dbReference type="KEGG" id="mmu:232337"/>
<dbReference type="UCSC" id="uc009dky.1">
    <molecule id="Q80V23-1"/>
    <property type="organism name" value="mouse"/>
</dbReference>
<dbReference type="UCSC" id="uc009dkz.1">
    <molecule id="Q80V23-2"/>
    <property type="organism name" value="mouse"/>
</dbReference>
<dbReference type="AGR" id="MGI:2448537"/>
<dbReference type="CTD" id="232337"/>
<dbReference type="MGI" id="MGI:2448537">
    <property type="gene designation" value="Zfp637"/>
</dbReference>
<dbReference type="VEuPathDB" id="HostDB:ENSMUSG00000059689"/>
<dbReference type="eggNOG" id="KOG1721">
    <property type="taxonomic scope" value="Eukaryota"/>
</dbReference>
<dbReference type="GeneTree" id="ENSGT00940000153582"/>
<dbReference type="HOGENOM" id="CLU_002678_18_0_1"/>
<dbReference type="InParanoid" id="Q80V23"/>
<dbReference type="OMA" id="WDFQNAF"/>
<dbReference type="OrthoDB" id="654211at2759"/>
<dbReference type="PhylomeDB" id="Q80V23"/>
<dbReference type="TreeFam" id="TF337055"/>
<dbReference type="BioGRID-ORCS" id="232337">
    <property type="hits" value="0 hits in 77 CRISPR screens"/>
</dbReference>
<dbReference type="ChiTaRS" id="Zfp637">
    <property type="organism name" value="mouse"/>
</dbReference>
<dbReference type="PRO" id="PR:Q80V23"/>
<dbReference type="Proteomes" id="UP000000589">
    <property type="component" value="Chromosome 6"/>
</dbReference>
<dbReference type="RNAct" id="Q80V23">
    <property type="molecule type" value="protein"/>
</dbReference>
<dbReference type="Bgee" id="ENSMUSG00000059689">
    <property type="expression patterns" value="Expressed in cortical plate and 240 other cell types or tissues"/>
</dbReference>
<dbReference type="ExpressionAtlas" id="Q80V23">
    <property type="expression patterns" value="baseline and differential"/>
</dbReference>
<dbReference type="GO" id="GO:0005634">
    <property type="term" value="C:nucleus"/>
    <property type="evidence" value="ECO:0000314"/>
    <property type="project" value="UniProtKB"/>
</dbReference>
<dbReference type="GO" id="GO:1990837">
    <property type="term" value="F:sequence-specific double-stranded DNA binding"/>
    <property type="evidence" value="ECO:0007669"/>
    <property type="project" value="Ensembl"/>
</dbReference>
<dbReference type="GO" id="GO:0008270">
    <property type="term" value="F:zinc ion binding"/>
    <property type="evidence" value="ECO:0007669"/>
    <property type="project" value="UniProtKB-KW"/>
</dbReference>
<dbReference type="FunFam" id="3.30.160.60:FF:000100">
    <property type="entry name" value="Zinc finger 45-like"/>
    <property type="match status" value="1"/>
</dbReference>
<dbReference type="FunFam" id="3.30.160.60:FF:000475">
    <property type="entry name" value="zinc finger protein 32 isoform X1"/>
    <property type="match status" value="2"/>
</dbReference>
<dbReference type="FunFam" id="3.30.160.60:FF:000505">
    <property type="entry name" value="zinc finger protein 32 isoform X1"/>
    <property type="match status" value="1"/>
</dbReference>
<dbReference type="FunFam" id="3.30.160.60:FF:001002">
    <property type="entry name" value="zinc finger protein 32 isoform X1"/>
    <property type="match status" value="1"/>
</dbReference>
<dbReference type="FunFam" id="3.30.160.60:FF:001498">
    <property type="entry name" value="Zinc finger protein 404"/>
    <property type="match status" value="2"/>
</dbReference>
<dbReference type="Gene3D" id="3.30.160.60">
    <property type="entry name" value="Classic Zinc Finger"/>
    <property type="match status" value="7"/>
</dbReference>
<dbReference type="InterPro" id="IPR036236">
    <property type="entry name" value="Znf_C2H2_sf"/>
</dbReference>
<dbReference type="InterPro" id="IPR013087">
    <property type="entry name" value="Znf_C2H2_type"/>
</dbReference>
<dbReference type="PANTHER" id="PTHR24409">
    <property type="entry name" value="ZINC FINGER PROTEIN 142"/>
    <property type="match status" value="1"/>
</dbReference>
<dbReference type="PANTHER" id="PTHR24409:SF331">
    <property type="entry name" value="ZINC FINGER PROTEIN 322A"/>
    <property type="match status" value="1"/>
</dbReference>
<dbReference type="Pfam" id="PF00096">
    <property type="entry name" value="zf-C2H2"/>
    <property type="match status" value="4"/>
</dbReference>
<dbReference type="Pfam" id="PF13912">
    <property type="entry name" value="zf-C2H2_6"/>
    <property type="match status" value="1"/>
</dbReference>
<dbReference type="Pfam" id="PF13465">
    <property type="entry name" value="zf-H2C2_2"/>
    <property type="match status" value="1"/>
</dbReference>
<dbReference type="SMART" id="SM00355">
    <property type="entry name" value="ZnF_C2H2"/>
    <property type="match status" value="7"/>
</dbReference>
<dbReference type="SUPFAM" id="SSF57667">
    <property type="entry name" value="beta-beta-alpha zinc fingers"/>
    <property type="match status" value="4"/>
</dbReference>
<dbReference type="PROSITE" id="PS00028">
    <property type="entry name" value="ZINC_FINGER_C2H2_1"/>
    <property type="match status" value="6"/>
</dbReference>
<dbReference type="PROSITE" id="PS50157">
    <property type="entry name" value="ZINC_FINGER_C2H2_2"/>
    <property type="match status" value="7"/>
</dbReference>
<reference key="1">
    <citation type="journal article" date="2005" name="Science">
        <title>The transcriptional landscape of the mammalian genome.</title>
        <authorList>
            <person name="Carninci P."/>
            <person name="Kasukawa T."/>
            <person name="Katayama S."/>
            <person name="Gough J."/>
            <person name="Frith M.C."/>
            <person name="Maeda N."/>
            <person name="Oyama R."/>
            <person name="Ravasi T."/>
            <person name="Lenhard B."/>
            <person name="Wells C."/>
            <person name="Kodzius R."/>
            <person name="Shimokawa K."/>
            <person name="Bajic V.B."/>
            <person name="Brenner S.E."/>
            <person name="Batalov S."/>
            <person name="Forrest A.R."/>
            <person name="Zavolan M."/>
            <person name="Davis M.J."/>
            <person name="Wilming L.G."/>
            <person name="Aidinis V."/>
            <person name="Allen J.E."/>
            <person name="Ambesi-Impiombato A."/>
            <person name="Apweiler R."/>
            <person name="Aturaliya R.N."/>
            <person name="Bailey T.L."/>
            <person name="Bansal M."/>
            <person name="Baxter L."/>
            <person name="Beisel K.W."/>
            <person name="Bersano T."/>
            <person name="Bono H."/>
            <person name="Chalk A.M."/>
            <person name="Chiu K.P."/>
            <person name="Choudhary V."/>
            <person name="Christoffels A."/>
            <person name="Clutterbuck D.R."/>
            <person name="Crowe M.L."/>
            <person name="Dalla E."/>
            <person name="Dalrymple B.P."/>
            <person name="de Bono B."/>
            <person name="Della Gatta G."/>
            <person name="di Bernardo D."/>
            <person name="Down T."/>
            <person name="Engstrom P."/>
            <person name="Fagiolini M."/>
            <person name="Faulkner G."/>
            <person name="Fletcher C.F."/>
            <person name="Fukushima T."/>
            <person name="Furuno M."/>
            <person name="Futaki S."/>
            <person name="Gariboldi M."/>
            <person name="Georgii-Hemming P."/>
            <person name="Gingeras T.R."/>
            <person name="Gojobori T."/>
            <person name="Green R.E."/>
            <person name="Gustincich S."/>
            <person name="Harbers M."/>
            <person name="Hayashi Y."/>
            <person name="Hensch T.K."/>
            <person name="Hirokawa N."/>
            <person name="Hill D."/>
            <person name="Huminiecki L."/>
            <person name="Iacono M."/>
            <person name="Ikeo K."/>
            <person name="Iwama A."/>
            <person name="Ishikawa T."/>
            <person name="Jakt M."/>
            <person name="Kanapin A."/>
            <person name="Katoh M."/>
            <person name="Kawasawa Y."/>
            <person name="Kelso J."/>
            <person name="Kitamura H."/>
            <person name="Kitano H."/>
            <person name="Kollias G."/>
            <person name="Krishnan S.P."/>
            <person name="Kruger A."/>
            <person name="Kummerfeld S.K."/>
            <person name="Kurochkin I.V."/>
            <person name="Lareau L.F."/>
            <person name="Lazarevic D."/>
            <person name="Lipovich L."/>
            <person name="Liu J."/>
            <person name="Liuni S."/>
            <person name="McWilliam S."/>
            <person name="Madan Babu M."/>
            <person name="Madera M."/>
            <person name="Marchionni L."/>
            <person name="Matsuda H."/>
            <person name="Matsuzawa S."/>
            <person name="Miki H."/>
            <person name="Mignone F."/>
            <person name="Miyake S."/>
            <person name="Morris K."/>
            <person name="Mottagui-Tabar S."/>
            <person name="Mulder N."/>
            <person name="Nakano N."/>
            <person name="Nakauchi H."/>
            <person name="Ng P."/>
            <person name="Nilsson R."/>
            <person name="Nishiguchi S."/>
            <person name="Nishikawa S."/>
            <person name="Nori F."/>
            <person name="Ohara O."/>
            <person name="Okazaki Y."/>
            <person name="Orlando V."/>
            <person name="Pang K.C."/>
            <person name="Pavan W.J."/>
            <person name="Pavesi G."/>
            <person name="Pesole G."/>
            <person name="Petrovsky N."/>
            <person name="Piazza S."/>
            <person name="Reed J."/>
            <person name="Reid J.F."/>
            <person name="Ring B.Z."/>
            <person name="Ringwald M."/>
            <person name="Rost B."/>
            <person name="Ruan Y."/>
            <person name="Salzberg S.L."/>
            <person name="Sandelin A."/>
            <person name="Schneider C."/>
            <person name="Schoenbach C."/>
            <person name="Sekiguchi K."/>
            <person name="Semple C.A."/>
            <person name="Seno S."/>
            <person name="Sessa L."/>
            <person name="Sheng Y."/>
            <person name="Shibata Y."/>
            <person name="Shimada H."/>
            <person name="Shimada K."/>
            <person name="Silva D."/>
            <person name="Sinclair B."/>
            <person name="Sperling S."/>
            <person name="Stupka E."/>
            <person name="Sugiura K."/>
            <person name="Sultana R."/>
            <person name="Takenaka Y."/>
            <person name="Taki K."/>
            <person name="Tammoja K."/>
            <person name="Tan S.L."/>
            <person name="Tang S."/>
            <person name="Taylor M.S."/>
            <person name="Tegner J."/>
            <person name="Teichmann S.A."/>
            <person name="Ueda H.R."/>
            <person name="van Nimwegen E."/>
            <person name="Verardo R."/>
            <person name="Wei C.L."/>
            <person name="Yagi K."/>
            <person name="Yamanishi H."/>
            <person name="Zabarovsky E."/>
            <person name="Zhu S."/>
            <person name="Zimmer A."/>
            <person name="Hide W."/>
            <person name="Bult C."/>
            <person name="Grimmond S.M."/>
            <person name="Teasdale R.D."/>
            <person name="Liu E.T."/>
            <person name="Brusic V."/>
            <person name="Quackenbush J."/>
            <person name="Wahlestedt C."/>
            <person name="Mattick J.S."/>
            <person name="Hume D.A."/>
            <person name="Kai C."/>
            <person name="Sasaki D."/>
            <person name="Tomaru Y."/>
            <person name="Fukuda S."/>
            <person name="Kanamori-Katayama M."/>
            <person name="Suzuki M."/>
            <person name="Aoki J."/>
            <person name="Arakawa T."/>
            <person name="Iida J."/>
            <person name="Imamura K."/>
            <person name="Itoh M."/>
            <person name="Kato T."/>
            <person name="Kawaji H."/>
            <person name="Kawagashira N."/>
            <person name="Kawashima T."/>
            <person name="Kojima M."/>
            <person name="Kondo S."/>
            <person name="Konno H."/>
            <person name="Nakano K."/>
            <person name="Ninomiya N."/>
            <person name="Nishio T."/>
            <person name="Okada M."/>
            <person name="Plessy C."/>
            <person name="Shibata K."/>
            <person name="Shiraki T."/>
            <person name="Suzuki S."/>
            <person name="Tagami M."/>
            <person name="Waki K."/>
            <person name="Watahiki A."/>
            <person name="Okamura-Oho Y."/>
            <person name="Suzuki H."/>
            <person name="Kawai J."/>
            <person name="Hayashizaki Y."/>
        </authorList>
    </citation>
    <scope>NUCLEOTIDE SEQUENCE [LARGE SCALE MRNA] (ISOFORM 2)</scope>
    <source>
        <strain>C57BL/6J</strain>
        <tissue>Heart</tissue>
    </source>
</reference>
<reference key="2">
    <citation type="journal article" date="2004" name="Genome Res.">
        <title>The status, quality, and expansion of the NIH full-length cDNA project: the Mammalian Gene Collection (MGC).</title>
        <authorList>
            <consortium name="The MGC Project Team"/>
        </authorList>
    </citation>
    <scope>NUCLEOTIDE SEQUENCE [LARGE SCALE MRNA] (ISOFORM 1)</scope>
    <source>
        <strain>C57BL/6J</strain>
        <strain>FVB/N</strain>
        <tissue>Mammary tumor</tissue>
    </source>
</reference>
<gene>
    <name type="primary">Znf32</name>
    <name type="synonym">Zfp637</name>
</gene>
<comment type="function">
    <text>May be involved in transcriptional regulation.</text>
</comment>
<comment type="subcellular location">
    <subcellularLocation>
        <location evidence="5">Nucleus</location>
    </subcellularLocation>
</comment>
<comment type="alternative products">
    <event type="alternative splicing"/>
    <isoform>
        <id>Q80V23-1</id>
        <name>1</name>
        <sequence type="displayed"/>
    </isoform>
    <isoform>
        <id>Q80V23-2</id>
        <name>2</name>
        <sequence type="described" ref="VSP_016954"/>
    </isoform>
</comment>
<comment type="similarity">
    <text evidence="5">Belongs to the krueppel C2H2-type zinc-finger protein family.</text>
</comment>
<keyword id="KW-0025">Alternative splicing</keyword>
<keyword id="KW-0479">Metal-binding</keyword>
<keyword id="KW-0539">Nucleus</keyword>
<keyword id="KW-1185">Reference proteome</keyword>
<keyword id="KW-0677">Repeat</keyword>
<keyword id="KW-0862">Zinc</keyword>
<keyword id="KW-0863">Zinc-finger</keyword>
<protein>
    <recommendedName>
        <fullName>Zinc finger protein 32</fullName>
    </recommendedName>
    <alternativeName>
        <fullName>Zinc finger protein 637</fullName>
    </alternativeName>
</protein>
<organism>
    <name type="scientific">Mus musculus</name>
    <name type="common">Mouse</name>
    <dbReference type="NCBI Taxonomy" id="10090"/>
    <lineage>
        <taxon>Eukaryota</taxon>
        <taxon>Metazoa</taxon>
        <taxon>Chordata</taxon>
        <taxon>Craniata</taxon>
        <taxon>Vertebrata</taxon>
        <taxon>Euteleostomi</taxon>
        <taxon>Mammalia</taxon>
        <taxon>Eutheria</taxon>
        <taxon>Euarchontoglires</taxon>
        <taxon>Glires</taxon>
        <taxon>Rodentia</taxon>
        <taxon>Myomorpha</taxon>
        <taxon>Muroidea</taxon>
        <taxon>Muridae</taxon>
        <taxon>Murinae</taxon>
        <taxon>Mus</taxon>
        <taxon>Mus</taxon>
    </lineage>
</organism>
<proteinExistence type="evidence at transcript level"/>
<evidence type="ECO:0000250" key="1">
    <source>
        <dbReference type="UniProtKB" id="P17041"/>
    </source>
</evidence>
<evidence type="ECO:0000255" key="2">
    <source>
        <dbReference type="PROSITE-ProRule" id="PRU00042"/>
    </source>
</evidence>
<evidence type="ECO:0000256" key="3">
    <source>
        <dbReference type="SAM" id="MobiDB-lite"/>
    </source>
</evidence>
<evidence type="ECO:0000303" key="4">
    <source>
    </source>
</evidence>
<evidence type="ECO:0000305" key="5"/>
<accession>Q80V23</accession>
<accession>Q3UIS3</accession>